<reference key="1">
    <citation type="submission" date="2014-01" db="EMBL/GenBank/DDBJ databases">
        <title>The Genome Sequence of Enterobacter cloacae UCI 50.</title>
        <authorList>
            <consortium name="The Broad Institute Genomics Platform"/>
            <consortium name="The Broad Institute Genome Sequencing Center for Infectious Disease"/>
            <person name="Murphy C."/>
            <person name="Cosimi L."/>
            <person name="Cerqueira G."/>
            <person name="Feldgarden M."/>
            <person name="Earl A."/>
            <person name="Hung D."/>
            <person name="Onderdonk A.B."/>
            <person name="Ferraro M.J."/>
            <person name="Hooper D."/>
            <person name="Dekker J."/>
            <person name="O'Brien T."/>
            <person name="Huang S."/>
            <person name="Quan V."/>
            <person name="Ernst C."/>
            <person name="Delaney M."/>
            <person name="DuBois A."/>
            <person name="Kim D.S."/>
            <person name="Young S.K."/>
            <person name="Zeng Q."/>
            <person name="Gargeya S."/>
            <person name="Fitzgerald M."/>
            <person name="Abouelleil A."/>
            <person name="Alvarado L."/>
            <person name="Berlin A.M."/>
            <person name="Chapman S.B."/>
            <person name="Gainer-Dewar J."/>
            <person name="Goldberg J."/>
            <person name="Gnerre S."/>
            <person name="Griggs A."/>
            <person name="Gujja S."/>
            <person name="Hansen M."/>
            <person name="Howarth C."/>
            <person name="Imamovic A."/>
            <person name="Ireland A."/>
            <person name="Larimer J."/>
            <person name="McCowan C."/>
            <person name="Murphy C."/>
            <person name="Pearson M."/>
            <person name="Poon T.W."/>
            <person name="Priest M."/>
            <person name="Roberts A."/>
            <person name="Saif S."/>
            <person name="Shea T."/>
            <person name="Sykes S."/>
            <person name="Wortman J."/>
            <person name="Nusbaum C."/>
            <person name="Birren B."/>
        </authorList>
    </citation>
    <scope>NUCLEOTIDE SEQUENCE [LARGE SCALE GENOMIC DNA]</scope>
    <source>
        <strain>UCI 50</strain>
    </source>
</reference>
<reference key="2">
    <citation type="journal article" date="2020" name="Cell">
        <title>CBASS immunity uses CARF-related effectors to sense 3'-5' and 2'-5'-linked cyclic oligonucleotide signals and protect bacteria from phage infection.</title>
        <authorList>
            <person name="Lowey B."/>
            <person name="Whiteley A.T."/>
            <person name="Keszei A.F.A."/>
            <person name="Morehouse B.R."/>
            <person name="Antine S.P."/>
            <person name="Cabrera V.J."/>
            <person name="Kashin D."/>
            <person name="Schwede F."/>
            <person name="Mekalanos J.J."/>
            <person name="Shao S."/>
            <person name="Lee A.S.Y."/>
            <person name="Kranzusch P.J."/>
        </authorList>
    </citation>
    <scope>ANTIVIRAL DEFENSE</scope>
    <scope>OPERON STRUCTURE</scope>
    <source>
        <strain>UCI 50</strain>
    </source>
</reference>
<reference key="3">
    <citation type="journal article" date="2020" name="Nat. Microbiol.">
        <title>Diversity and classification of cyclic-oligonucleotide-based anti-phage signalling systems.</title>
        <authorList>
            <person name="Millman A."/>
            <person name="Melamed S."/>
            <person name="Amitai G."/>
            <person name="Sorek R."/>
        </authorList>
    </citation>
    <scope>CLASSIFICATION AND NOMENCLATURE</scope>
</reference>
<reference key="4">
    <citation type="journal article" date="2023" name="Nature">
        <title>An E1-E2 fusion protein primes antiviral immune signalling in bacteria.</title>
        <authorList>
            <person name="Ledvina H.E."/>
            <person name="Ye Q."/>
            <person name="Gu Y."/>
            <person name="Sullivan A.E."/>
            <person name="Quan Y."/>
            <person name="Lau R.K."/>
            <person name="Zhou H."/>
            <person name="Corbett K.D."/>
            <person name="Whiteley A.T."/>
        </authorList>
    </citation>
    <scope>ANTIVIRAL DEFENSE</scope>
    <scope>FUNCTION</scope>
    <scope>ACTIVITY REGULATION</scope>
    <scope>DISRUPTION PHENOTYPE</scope>
    <scope>MUTAGENESIS OF GLU-54</scope>
    <source>
        <strain>El Tor C6706</strain>
    </source>
</reference>
<reference key="5">
    <citation type="journal article" date="2023" name="Nature">
        <title>Ubiquitin-like conjugation by bacterial cGAS enhances anti-phage defence.</title>
        <authorList>
            <person name="Jenson J.M."/>
            <person name="Li T."/>
            <person name="Du F."/>
            <person name="Ea C.K."/>
            <person name="Chen Z.J."/>
        </authorList>
    </citation>
    <scope>FUNCTION</scope>
    <scope>MUTAGENESIS OF GLU-54</scope>
    <source>
        <strain>El Tor C6706</strain>
    </source>
</reference>
<name>CAP3_ENTH5</name>
<evidence type="ECO:0000255" key="1">
    <source>
        <dbReference type="PROSITE-ProRule" id="PRU01182"/>
    </source>
</evidence>
<evidence type="ECO:0000269" key="2">
    <source>
    </source>
</evidence>
<evidence type="ECO:0000269" key="3">
    <source>
    </source>
</evidence>
<evidence type="ECO:0000269" key="4">
    <source>
    </source>
</evidence>
<evidence type="ECO:0000303" key="5">
    <source>
    </source>
</evidence>
<evidence type="ECO:0000303" key="6">
    <source>
    </source>
</evidence>
<evidence type="ECO:0000303" key="7">
    <source>
    </source>
</evidence>
<evidence type="ECO:0000303" key="8">
    <source>
    </source>
</evidence>
<evidence type="ECO:0000305" key="9"/>
<evidence type="ECO:0000305" key="10">
    <source>
    </source>
</evidence>
<evidence type="ECO:0000305" key="11">
    <source>
    </source>
</evidence>
<evidence type="ECO:0000305" key="12">
    <source>
    </source>
</evidence>
<evidence type="ECO:0000312" key="13">
    <source>
        <dbReference type="EMBL" id="EUL39001.1"/>
    </source>
</evidence>
<dbReference type="EC" id="3.4.-.-" evidence="3 12"/>
<dbReference type="EMBL" id="JCKK01000002">
    <property type="protein sequence ID" value="EUL39001.1"/>
    <property type="molecule type" value="Genomic_DNA"/>
</dbReference>
<dbReference type="SMR" id="P0DX83"/>
<dbReference type="GO" id="GO:0046872">
    <property type="term" value="F:metal ion binding"/>
    <property type="evidence" value="ECO:0007669"/>
    <property type="project" value="UniProtKB-KW"/>
</dbReference>
<dbReference type="GO" id="GO:0008237">
    <property type="term" value="F:metallopeptidase activity"/>
    <property type="evidence" value="ECO:0007669"/>
    <property type="project" value="UniProtKB-KW"/>
</dbReference>
<dbReference type="GO" id="GO:0051607">
    <property type="term" value="P:defense response to virus"/>
    <property type="evidence" value="ECO:0007669"/>
    <property type="project" value="UniProtKB-KW"/>
</dbReference>
<dbReference type="GO" id="GO:0006508">
    <property type="term" value="P:proteolysis"/>
    <property type="evidence" value="ECO:0007669"/>
    <property type="project" value="UniProtKB-KW"/>
</dbReference>
<dbReference type="Gene3D" id="3.40.140.10">
    <property type="entry name" value="Cytidine Deaminase, domain 2"/>
    <property type="match status" value="1"/>
</dbReference>
<dbReference type="InterPro" id="IPR028090">
    <property type="entry name" value="JAB_dom_prok"/>
</dbReference>
<dbReference type="InterPro" id="IPR037518">
    <property type="entry name" value="MPN"/>
</dbReference>
<dbReference type="Pfam" id="PF14464">
    <property type="entry name" value="Prok-JAB"/>
    <property type="match status" value="1"/>
</dbReference>
<dbReference type="SUPFAM" id="SSF102712">
    <property type="entry name" value="JAB1/MPN domain"/>
    <property type="match status" value="1"/>
</dbReference>
<dbReference type="PROSITE" id="PS50249">
    <property type="entry name" value="MPN"/>
    <property type="match status" value="1"/>
</dbReference>
<feature type="chain" id="PRO_0000459518" description="CD-NTase/cGAS isopeptidase">
    <location>
        <begin position="1"/>
        <end position="180"/>
    </location>
</feature>
<feature type="domain" description="MPN" evidence="1">
    <location>
        <begin position="33"/>
        <end position="165"/>
    </location>
</feature>
<feature type="active site" description="Proton donor/acceptor" evidence="11">
    <location>
        <position position="54"/>
    </location>
</feature>
<feature type="binding site" evidence="1">
    <location>
        <position position="115"/>
    </location>
    <ligand>
        <name>Zn(2+)</name>
        <dbReference type="ChEBI" id="CHEBI:29105"/>
        <note>catalytic</note>
    </ligand>
</feature>
<feature type="binding site" evidence="1">
    <location>
        <position position="117"/>
    </location>
    <ligand>
        <name>Zn(2+)</name>
        <dbReference type="ChEBI" id="CHEBI:29105"/>
        <note>catalytic</note>
    </ligand>
</feature>
<feature type="binding site" evidence="1">
    <location>
        <position position="128"/>
    </location>
    <ligand>
        <name>Zn(2+)</name>
        <dbReference type="ChEBI" id="CHEBI:29105"/>
        <note>catalytic</note>
    </ligand>
</feature>
<feature type="mutagenesis site" description="Does not cleave CdnD-GFP fusion protein. Increased conjugation of DncV to cellular proteins." evidence="3 4">
    <original>E</original>
    <variation>A</variation>
    <location>
        <position position="54"/>
    </location>
</feature>
<sequence length="180" mass="19409">MNILSRCLMALSRKSRMSIKDVTFSSEGALYTIVISSSTIEQMVSECLKAGVNETGGILIGSYSEDSSTAMIVEATTRPADSLAGRTTFQRGVRGLRPLLHARWKTGLYYVGEWHFHPGGSPEPSGDDFRSMTSIAANSDYQCLEPVMIILGGDPAGSYSLSASVSPRGDAPIRLREVLI</sequence>
<proteinExistence type="evidence at protein level"/>
<gene>
    <name evidence="5" type="primary">cap3</name>
    <name evidence="13" type="ORF">P853_02264</name>
</gene>
<keyword id="KW-0051">Antiviral defense</keyword>
<keyword id="KW-0378">Hydrolase</keyword>
<keyword id="KW-0479">Metal-binding</keyword>
<keyword id="KW-0482">Metalloprotease</keyword>
<keyword id="KW-0645">Protease</keyword>
<keyword id="KW-0862">Zinc</keyword>
<comment type="function">
    <text evidence="2 3 4 6">Metalloprotease priming reversal component of a CBASS antivirus system (PubMed:36755092, PubMed:36848932). CBASS (cyclic oligonucleotide-based antiphage signaling system) provides immunity against bacteriophages (PubMed:32544385, PubMed:36755092). The CD-NTase protein (CdnD) synthesizes cyclic nucleotides in response to infection; these serve as specific second messenger signals. The signals activate a diverse range of effectors, leading to bacterial cell death and thus abortive phage infection (PubMed:32544385, PubMed:36755092). A type II-C(AAG) CBASS system (PubMed:32839535).</text>
</comment>
<comment type="function">
    <text evidence="3 12">Reverses the primed state of DncV, the CD-NTase (Probable) (PubMed:36848932). Cleaves a CdnD-GFP (green fluorescent protein) fusion protein precisely at the C-terminus of CdnD (PubMed:36755092). Overexpression decreases the efficacy of CBASS protection against phage T2 (PubMed:36755092). Antagonism of phage defense upon overexpression is CBASS-system specific, Cap3 from this bacteria only antagonizes its cognate CBASS system and not that of C.freundii, E.coli or V.cholerae (PubMed:36755092).</text>
</comment>
<comment type="function">
    <text evidence="2 3">Protects E.coli against phage T2 infection (PubMed:32544385). When the cdnD-cap2-cap3-cap4 operon is introduced in E.coli there is a more than 10(3) decrease in the efficiency of T2 plaque formation (PubMed:32544385, PubMed:36755092). The operon does not protect against phage T5 and only about 10-fold against T7 (PubMed:32544385).</text>
</comment>
<comment type="induction">
    <text evidence="10">Part of a CBASS operon consisting of cap4-cdnD-cap2-cap3.</text>
</comment>
<comment type="disruption phenotype">
    <text evidence="3">Essential for CBASS function; when the operon missing this gene is introduced in E.coli it no longer protects against phages T2, T4, T5 or T6 (PubMed:36755092).</text>
</comment>
<comment type="similarity">
    <text evidence="9">Belongs to the peptidase M67B family. Cap3 isopeptidase subfamily.</text>
</comment>
<organism>
    <name type="scientific">Enterobacter hormaechei subsp. hoffmannii (strain UCI 50)</name>
    <dbReference type="NCBI Taxonomy" id="1400155"/>
    <lineage>
        <taxon>Bacteria</taxon>
        <taxon>Pseudomonadati</taxon>
        <taxon>Pseudomonadota</taxon>
        <taxon>Gammaproteobacteria</taxon>
        <taxon>Enterobacterales</taxon>
        <taxon>Enterobacteriaceae</taxon>
        <taxon>Enterobacter</taxon>
        <taxon>Enterobacter cloacae complex</taxon>
    </lineage>
</organism>
<protein>
    <recommendedName>
        <fullName evidence="8">CD-NTase/cGAS isopeptidase</fullName>
        <ecNumber evidence="3 12">3.4.-.-</ecNumber>
    </recommendedName>
    <alternativeName>
        <fullName evidence="5">CD-NTase-associated protein 3</fullName>
        <shortName evidence="5">Cap3</shortName>
    </alternativeName>
    <alternativeName>
        <fullName evidence="7">Cap3 protease</fullName>
    </alternativeName>
</protein>
<accession>P0DX83</accession>